<organism>
    <name type="scientific">Schizosaccharomyces pombe (strain 972 / ATCC 24843)</name>
    <name type="common">Fission yeast</name>
    <dbReference type="NCBI Taxonomy" id="284812"/>
    <lineage>
        <taxon>Eukaryota</taxon>
        <taxon>Fungi</taxon>
        <taxon>Dikarya</taxon>
        <taxon>Ascomycota</taxon>
        <taxon>Taphrinomycotina</taxon>
        <taxon>Schizosaccharomycetes</taxon>
        <taxon>Schizosaccharomycetales</taxon>
        <taxon>Schizosaccharomycetaceae</taxon>
        <taxon>Schizosaccharomyces</taxon>
    </lineage>
</organism>
<accession>O60102</accession>
<name>RLI1_SCHPO</name>
<evidence type="ECO:0000250" key="1"/>
<evidence type="ECO:0000255" key="2">
    <source>
        <dbReference type="PROSITE-ProRule" id="PRU00434"/>
    </source>
</evidence>
<evidence type="ECO:0000255" key="3">
    <source>
        <dbReference type="PROSITE-ProRule" id="PRU00711"/>
    </source>
</evidence>
<evidence type="ECO:0000269" key="4">
    <source>
    </source>
</evidence>
<evidence type="ECO:0000305" key="5"/>
<reference key="1">
    <citation type="journal article" date="2002" name="Nature">
        <title>The genome sequence of Schizosaccharomyces pombe.</title>
        <authorList>
            <person name="Wood V."/>
            <person name="Gwilliam R."/>
            <person name="Rajandream M.A."/>
            <person name="Lyne M.H."/>
            <person name="Lyne R."/>
            <person name="Stewart A."/>
            <person name="Sgouros J.G."/>
            <person name="Peat N."/>
            <person name="Hayles J."/>
            <person name="Baker S.G."/>
            <person name="Basham D."/>
            <person name="Bowman S."/>
            <person name="Brooks K."/>
            <person name="Brown D."/>
            <person name="Brown S."/>
            <person name="Chillingworth T."/>
            <person name="Churcher C.M."/>
            <person name="Collins M."/>
            <person name="Connor R."/>
            <person name="Cronin A."/>
            <person name="Davis P."/>
            <person name="Feltwell T."/>
            <person name="Fraser A."/>
            <person name="Gentles S."/>
            <person name="Goble A."/>
            <person name="Hamlin N."/>
            <person name="Harris D.E."/>
            <person name="Hidalgo J."/>
            <person name="Hodgson G."/>
            <person name="Holroyd S."/>
            <person name="Hornsby T."/>
            <person name="Howarth S."/>
            <person name="Huckle E.J."/>
            <person name="Hunt S."/>
            <person name="Jagels K."/>
            <person name="James K.D."/>
            <person name="Jones L."/>
            <person name="Jones M."/>
            <person name="Leather S."/>
            <person name="McDonald S."/>
            <person name="McLean J."/>
            <person name="Mooney P."/>
            <person name="Moule S."/>
            <person name="Mungall K.L."/>
            <person name="Murphy L.D."/>
            <person name="Niblett D."/>
            <person name="Odell C."/>
            <person name="Oliver K."/>
            <person name="O'Neil S."/>
            <person name="Pearson D."/>
            <person name="Quail M.A."/>
            <person name="Rabbinowitsch E."/>
            <person name="Rutherford K.M."/>
            <person name="Rutter S."/>
            <person name="Saunders D."/>
            <person name="Seeger K."/>
            <person name="Sharp S."/>
            <person name="Skelton J."/>
            <person name="Simmonds M.N."/>
            <person name="Squares R."/>
            <person name="Squares S."/>
            <person name="Stevens K."/>
            <person name="Taylor K."/>
            <person name="Taylor R.G."/>
            <person name="Tivey A."/>
            <person name="Walsh S.V."/>
            <person name="Warren T."/>
            <person name="Whitehead S."/>
            <person name="Woodward J.R."/>
            <person name="Volckaert G."/>
            <person name="Aert R."/>
            <person name="Robben J."/>
            <person name="Grymonprez B."/>
            <person name="Weltjens I."/>
            <person name="Vanstreels E."/>
            <person name="Rieger M."/>
            <person name="Schaefer M."/>
            <person name="Mueller-Auer S."/>
            <person name="Gabel C."/>
            <person name="Fuchs M."/>
            <person name="Duesterhoeft A."/>
            <person name="Fritzc C."/>
            <person name="Holzer E."/>
            <person name="Moestl D."/>
            <person name="Hilbert H."/>
            <person name="Borzym K."/>
            <person name="Langer I."/>
            <person name="Beck A."/>
            <person name="Lehrach H."/>
            <person name="Reinhardt R."/>
            <person name="Pohl T.M."/>
            <person name="Eger P."/>
            <person name="Zimmermann W."/>
            <person name="Wedler H."/>
            <person name="Wambutt R."/>
            <person name="Purnelle B."/>
            <person name="Goffeau A."/>
            <person name="Cadieu E."/>
            <person name="Dreano S."/>
            <person name="Gloux S."/>
            <person name="Lelaure V."/>
            <person name="Mottier S."/>
            <person name="Galibert F."/>
            <person name="Aves S.J."/>
            <person name="Xiang Z."/>
            <person name="Hunt C."/>
            <person name="Moore K."/>
            <person name="Hurst S.M."/>
            <person name="Lucas M."/>
            <person name="Rochet M."/>
            <person name="Gaillardin C."/>
            <person name="Tallada V.A."/>
            <person name="Garzon A."/>
            <person name="Thode G."/>
            <person name="Daga R.R."/>
            <person name="Cruzado L."/>
            <person name="Jimenez J."/>
            <person name="Sanchez M."/>
            <person name="del Rey F."/>
            <person name="Benito J."/>
            <person name="Dominguez A."/>
            <person name="Revuelta J.L."/>
            <person name="Moreno S."/>
            <person name="Armstrong J."/>
            <person name="Forsburg S.L."/>
            <person name="Cerutti L."/>
            <person name="Lowe T."/>
            <person name="McCombie W.R."/>
            <person name="Paulsen I."/>
            <person name="Potashkin J."/>
            <person name="Shpakovski G.V."/>
            <person name="Ussery D."/>
            <person name="Barrell B.G."/>
            <person name="Nurse P."/>
        </authorList>
    </citation>
    <scope>NUCLEOTIDE SEQUENCE [LARGE SCALE GENOMIC DNA]</scope>
    <source>
        <strain>972 / ATCC 24843</strain>
    </source>
</reference>
<reference key="2">
    <citation type="journal article" date="2006" name="Nat. Biotechnol.">
        <title>ORFeome cloning and global analysis of protein localization in the fission yeast Schizosaccharomyces pombe.</title>
        <authorList>
            <person name="Matsuyama A."/>
            <person name="Arai R."/>
            <person name="Yashiroda Y."/>
            <person name="Shirai A."/>
            <person name="Kamata A."/>
            <person name="Sekido S."/>
            <person name="Kobayashi Y."/>
            <person name="Hashimoto A."/>
            <person name="Hamamoto M."/>
            <person name="Hiraoka Y."/>
            <person name="Horinouchi S."/>
            <person name="Yoshida M."/>
        </authorList>
    </citation>
    <scope>SUBCELLULAR LOCATION [LARGE SCALE ANALYSIS]</scope>
</reference>
<proteinExistence type="inferred from homology"/>
<protein>
    <recommendedName>
        <fullName>Translation initiation factor rli1</fullName>
    </recommendedName>
    <alternativeName>
        <fullName>ATP-binding cassette sub-family E member rli1</fullName>
    </alternativeName>
    <alternativeName>
        <fullName>RNase L inhibitor</fullName>
    </alternativeName>
</protein>
<comment type="function">
    <text evidence="1">Component of the multifactor complex (MFC) involved in translation initiation. Required for the binding of MFC to the 40S ribosome. Required for the processing and nuclear export of the 60S and 40S ribosomal subunits (By similarity).</text>
</comment>
<comment type="subunit">
    <text evidence="1">Component of the multifactor complex (MFC). The complex associates with pre-initiation complexes (By similarity).</text>
</comment>
<comment type="subcellular location">
    <subcellularLocation>
        <location evidence="4">Cytoplasm</location>
    </subcellularLocation>
    <subcellularLocation>
        <location evidence="1">Nucleus</location>
    </subcellularLocation>
    <text evidence="1">Shuttles between the nucleus and the cytoplasm.</text>
</comment>
<comment type="similarity">
    <text evidence="5">Belongs to the ABC transporter superfamily.</text>
</comment>
<dbReference type="EMBL" id="CU329671">
    <property type="protein sequence ID" value="CAA19324.1"/>
    <property type="molecule type" value="Genomic_DNA"/>
</dbReference>
<dbReference type="PIR" id="T39452">
    <property type="entry name" value="T39452"/>
</dbReference>
<dbReference type="RefSeq" id="NP_596732.1">
    <property type="nucleotide sequence ID" value="NM_001022658.2"/>
</dbReference>
<dbReference type="SMR" id="O60102"/>
<dbReference type="BioGRID" id="276305">
    <property type="interactions" value="2"/>
</dbReference>
<dbReference type="FunCoup" id="O60102">
    <property type="interactions" value="888"/>
</dbReference>
<dbReference type="STRING" id="284812.O60102"/>
<dbReference type="iPTMnet" id="O60102"/>
<dbReference type="PaxDb" id="4896-SPBC14F5.06.1"/>
<dbReference type="EnsemblFungi" id="SPBC14F5.06.1">
    <property type="protein sequence ID" value="SPBC14F5.06.1:pep"/>
    <property type="gene ID" value="SPBC14F5.06"/>
</dbReference>
<dbReference type="GeneID" id="2539753"/>
<dbReference type="KEGG" id="spo:2539753"/>
<dbReference type="PomBase" id="SPBC14F5.06">
    <property type="gene designation" value="rli1"/>
</dbReference>
<dbReference type="VEuPathDB" id="FungiDB:SPBC14F5.06"/>
<dbReference type="eggNOG" id="KOG0063">
    <property type="taxonomic scope" value="Eukaryota"/>
</dbReference>
<dbReference type="HOGENOM" id="CLU_017344_4_1_1"/>
<dbReference type="InParanoid" id="O60102"/>
<dbReference type="OMA" id="MVCIQNG"/>
<dbReference type="PhylomeDB" id="O60102"/>
<dbReference type="PRO" id="PR:O60102"/>
<dbReference type="Proteomes" id="UP000002485">
    <property type="component" value="Chromosome II"/>
</dbReference>
<dbReference type="GO" id="GO:0005829">
    <property type="term" value="C:cytosol"/>
    <property type="evidence" value="ECO:0007005"/>
    <property type="project" value="PomBase"/>
</dbReference>
<dbReference type="GO" id="GO:0005634">
    <property type="term" value="C:nucleus"/>
    <property type="evidence" value="ECO:0000266"/>
    <property type="project" value="PomBase"/>
</dbReference>
<dbReference type="GO" id="GO:0005524">
    <property type="term" value="F:ATP binding"/>
    <property type="evidence" value="ECO:0000318"/>
    <property type="project" value="GO_Central"/>
</dbReference>
<dbReference type="GO" id="GO:0016887">
    <property type="term" value="F:ATP hydrolysis activity"/>
    <property type="evidence" value="ECO:0000255"/>
    <property type="project" value="PomBase"/>
</dbReference>
<dbReference type="GO" id="GO:0005506">
    <property type="term" value="F:iron ion binding"/>
    <property type="evidence" value="ECO:0000318"/>
    <property type="project" value="GO_Central"/>
</dbReference>
<dbReference type="GO" id="GO:0051536">
    <property type="term" value="F:iron-sulfur cluster binding"/>
    <property type="evidence" value="ECO:0000255"/>
    <property type="project" value="PomBase"/>
</dbReference>
<dbReference type="GO" id="GO:0043024">
    <property type="term" value="F:ribosomal small subunit binding"/>
    <property type="evidence" value="ECO:0000318"/>
    <property type="project" value="GO_Central"/>
</dbReference>
<dbReference type="GO" id="GO:0003743">
    <property type="term" value="F:translation initiation factor activity"/>
    <property type="evidence" value="ECO:0007669"/>
    <property type="project" value="UniProtKB-KW"/>
</dbReference>
<dbReference type="GO" id="GO:0002183">
    <property type="term" value="P:cytoplasmic translational initiation"/>
    <property type="evidence" value="ECO:0000266"/>
    <property type="project" value="PomBase"/>
</dbReference>
<dbReference type="GO" id="GO:0042273">
    <property type="term" value="P:ribosomal large subunit biogenesis"/>
    <property type="evidence" value="ECO:0000266"/>
    <property type="project" value="PomBase"/>
</dbReference>
<dbReference type="GO" id="GO:0006364">
    <property type="term" value="P:rRNA processing"/>
    <property type="evidence" value="ECO:0007669"/>
    <property type="project" value="UniProtKB-KW"/>
</dbReference>
<dbReference type="GO" id="GO:0006413">
    <property type="term" value="P:translational initiation"/>
    <property type="evidence" value="ECO:0000318"/>
    <property type="project" value="GO_Central"/>
</dbReference>
<dbReference type="GO" id="GO:0006415">
    <property type="term" value="P:translational termination"/>
    <property type="evidence" value="ECO:0000318"/>
    <property type="project" value="GO_Central"/>
</dbReference>
<dbReference type="CDD" id="cd03236">
    <property type="entry name" value="ABC_RNaseL_inhibitor_domain1"/>
    <property type="match status" value="1"/>
</dbReference>
<dbReference type="FunFam" id="3.40.50.300:FF:000144">
    <property type="entry name" value="ATP-binding cassette sub-family E member 1"/>
    <property type="match status" value="1"/>
</dbReference>
<dbReference type="FunFam" id="3.40.50.300:FF:000152">
    <property type="entry name" value="ATP-binding cassette, sub-family E, member 1"/>
    <property type="match status" value="1"/>
</dbReference>
<dbReference type="Gene3D" id="3.40.50.300">
    <property type="entry name" value="P-loop containing nucleotide triphosphate hydrolases"/>
    <property type="match status" value="2"/>
</dbReference>
<dbReference type="InterPro" id="IPR017896">
    <property type="entry name" value="4Fe4S_Fe-S-bd"/>
</dbReference>
<dbReference type="InterPro" id="IPR017900">
    <property type="entry name" value="4Fe4S_Fe_S_CS"/>
</dbReference>
<dbReference type="InterPro" id="IPR003593">
    <property type="entry name" value="AAA+_ATPase"/>
</dbReference>
<dbReference type="InterPro" id="IPR003439">
    <property type="entry name" value="ABC_transporter-like_ATP-bd"/>
</dbReference>
<dbReference type="InterPro" id="IPR017871">
    <property type="entry name" value="ABC_transporter-like_CS"/>
</dbReference>
<dbReference type="InterPro" id="IPR027417">
    <property type="entry name" value="P-loop_NTPase"/>
</dbReference>
<dbReference type="InterPro" id="IPR013283">
    <property type="entry name" value="RLI1"/>
</dbReference>
<dbReference type="InterPro" id="IPR034348">
    <property type="entry name" value="RLI_dom_1"/>
</dbReference>
<dbReference type="InterPro" id="IPR007209">
    <property type="entry name" value="RNaseL-inhib-like_metal-bd_dom"/>
</dbReference>
<dbReference type="NCBIfam" id="NF009945">
    <property type="entry name" value="PRK13409.1"/>
    <property type="match status" value="1"/>
</dbReference>
<dbReference type="PANTHER" id="PTHR19248">
    <property type="entry name" value="ATP-BINDING TRANSPORT PROTEIN-RELATED"/>
    <property type="match status" value="1"/>
</dbReference>
<dbReference type="Pfam" id="PF00005">
    <property type="entry name" value="ABC_tran"/>
    <property type="match status" value="2"/>
</dbReference>
<dbReference type="Pfam" id="PF00037">
    <property type="entry name" value="Fer4"/>
    <property type="match status" value="1"/>
</dbReference>
<dbReference type="Pfam" id="PF04068">
    <property type="entry name" value="Fer4_RLI"/>
    <property type="match status" value="1"/>
</dbReference>
<dbReference type="PRINTS" id="PR01868">
    <property type="entry name" value="ABCEFAMILY"/>
</dbReference>
<dbReference type="SMART" id="SM00382">
    <property type="entry name" value="AAA"/>
    <property type="match status" value="2"/>
</dbReference>
<dbReference type="SUPFAM" id="SSF54862">
    <property type="entry name" value="4Fe-4S ferredoxins"/>
    <property type="match status" value="1"/>
</dbReference>
<dbReference type="SUPFAM" id="SSF52540">
    <property type="entry name" value="P-loop containing nucleoside triphosphate hydrolases"/>
    <property type="match status" value="2"/>
</dbReference>
<dbReference type="PROSITE" id="PS00198">
    <property type="entry name" value="4FE4S_FER_1"/>
    <property type="match status" value="1"/>
</dbReference>
<dbReference type="PROSITE" id="PS51379">
    <property type="entry name" value="4FE4S_FER_2"/>
    <property type="match status" value="2"/>
</dbReference>
<dbReference type="PROSITE" id="PS00211">
    <property type="entry name" value="ABC_TRANSPORTER_1"/>
    <property type="match status" value="2"/>
</dbReference>
<dbReference type="PROSITE" id="PS50893">
    <property type="entry name" value="ABC_TRANSPORTER_2"/>
    <property type="match status" value="2"/>
</dbReference>
<gene>
    <name type="primary">rli1</name>
    <name type="ORF">SPBC14F5.06</name>
</gene>
<feature type="chain" id="PRO_0000316194" description="Translation initiation factor rli1">
    <location>
        <begin position="1"/>
        <end position="593"/>
    </location>
</feature>
<feature type="domain" description="4Fe-4S ferredoxin-type 1" evidence="3">
    <location>
        <begin position="7"/>
        <end position="39"/>
    </location>
</feature>
<feature type="domain" description="4Fe-4S ferredoxin-type 2" evidence="3">
    <location>
        <begin position="46"/>
        <end position="75"/>
    </location>
</feature>
<feature type="domain" description="ABC transporter 1" evidence="2">
    <location>
        <begin position="70"/>
        <end position="318"/>
    </location>
</feature>
<feature type="domain" description="ABC transporter 2" evidence="2">
    <location>
        <begin position="334"/>
        <end position="556"/>
    </location>
</feature>
<feature type="binding site" evidence="2">
    <location>
        <begin position="110"/>
        <end position="117"/>
    </location>
    <ligand>
        <name>ATP</name>
        <dbReference type="ChEBI" id="CHEBI:30616"/>
    </ligand>
</feature>
<feature type="binding site" evidence="2">
    <location>
        <begin position="382"/>
        <end position="389"/>
    </location>
    <ligand>
        <name>ATP</name>
        <dbReference type="ChEBI" id="CHEBI:30616"/>
    </ligand>
</feature>
<keyword id="KW-0067">ATP-binding</keyword>
<keyword id="KW-0963">Cytoplasm</keyword>
<keyword id="KW-0396">Initiation factor</keyword>
<keyword id="KW-0547">Nucleotide-binding</keyword>
<keyword id="KW-0539">Nucleus</keyword>
<keyword id="KW-0648">Protein biosynthesis</keyword>
<keyword id="KW-1185">Reference proteome</keyword>
<keyword id="KW-0677">Repeat</keyword>
<keyword id="KW-0690">Ribosome biogenesis</keyword>
<keyword id="KW-0698">rRNA processing</keyword>
<keyword id="KW-0813">Transport</keyword>
<sequence length="593" mass="66590">MSESLTRIAIVSEDKCRPKKCRQECRRSCPVVRTGKLCIEVNPTDRIAFISETLCIGCGICVKKCPFGAINIINLPTNLESEVTHRYSANSFKLHRLPTPRPGQVLGLVGTNGIGKSTALKILSGKMKPNLGRYDNPPDWAEVVKYFRGSELQNFFTKVVEDNIKALIKPQYVDHIPRAIKTGDKTVSGLIKARANNNNFEEVMDHTDLQNLLNREVGHLSGGELQRFAIAAVATQKADVYMFDEPSSYLDIKQRLKAGRVIRSLLATTNYVIVVEHDLSVLDYLSDFVCVLYGVPSMYGVVTLPYSVREGINIFLDGHIPTENLRFRSEALTFRLADASDEITADRTAEYNYPDHVIEQGDFKLTIKSGGFSDAEIIVLLGENGTGKTTFCKWMAKNSDLKISMKPQTIAPKFQGTVRMLFLKKIRAAFLNGKFQSEVCKPLSIDNIIDQEVLNLSGGELQRVAICLALGMPADVYLIDEPSAYLDSEQRIIASKVIRRFIVNSRKTAFIVEHDFIMATYLADRVILFEGQPSRDARCNPPQSLLTGMNTFLKNLDVTFRRDPNTLRPRINKFDSQMDQEQKNAGNYFFLEN</sequence>